<evidence type="ECO:0000250" key="1"/>
<evidence type="ECO:0000305" key="2"/>
<reference key="1">
    <citation type="journal article" date="2004" name="Science">
        <title>The Ashbya gossypii genome as a tool for mapping the ancient Saccharomyces cerevisiae genome.</title>
        <authorList>
            <person name="Dietrich F.S."/>
            <person name="Voegeli S."/>
            <person name="Brachat S."/>
            <person name="Lerch A."/>
            <person name="Gates K."/>
            <person name="Steiner S."/>
            <person name="Mohr C."/>
            <person name="Poehlmann R."/>
            <person name="Luedi P."/>
            <person name="Choi S."/>
            <person name="Wing R.A."/>
            <person name="Flavier A."/>
            <person name="Gaffney T.D."/>
            <person name="Philippsen P."/>
        </authorList>
    </citation>
    <scope>NUCLEOTIDE SEQUENCE [LARGE SCALE GENOMIC DNA]</scope>
    <source>
        <strain>ATCC 10895 / CBS 109.51 / FGSC 9923 / NRRL Y-1056</strain>
    </source>
</reference>
<reference key="2">
    <citation type="journal article" date="2013" name="G3 (Bethesda)">
        <title>Genomes of Ashbya fungi isolated from insects reveal four mating-type loci, numerous translocations, lack of transposons, and distinct gene duplications.</title>
        <authorList>
            <person name="Dietrich F.S."/>
            <person name="Voegeli S."/>
            <person name="Kuo S."/>
            <person name="Philippsen P."/>
        </authorList>
    </citation>
    <scope>GENOME REANNOTATION</scope>
    <scope>SEQUENCE REVISION TO 97</scope>
    <source>
        <strain>ATCC 10895 / CBS 109.51 / FGSC 9923 / NRRL Y-1056</strain>
    </source>
</reference>
<gene>
    <name type="primary">ATG10</name>
    <name type="ordered locus">ACL066C</name>
</gene>
<dbReference type="EC" id="2.3.2.-"/>
<dbReference type="EMBL" id="AE016816">
    <property type="protein sequence ID" value="AAS51162.2"/>
    <property type="molecule type" value="Genomic_DNA"/>
</dbReference>
<dbReference type="RefSeq" id="NP_983338.2">
    <property type="nucleotide sequence ID" value="NM_208691.2"/>
</dbReference>
<dbReference type="SMR" id="Q75CI5"/>
<dbReference type="EnsemblFungi" id="AAS51162">
    <property type="protein sequence ID" value="AAS51162"/>
    <property type="gene ID" value="AGOS_ACL066C"/>
</dbReference>
<dbReference type="GeneID" id="4619458"/>
<dbReference type="KEGG" id="ago:AGOS_ACL066C"/>
<dbReference type="HOGENOM" id="CLU_114192_0_0_1"/>
<dbReference type="InParanoid" id="Q75CI5"/>
<dbReference type="OMA" id="CDTDANV"/>
<dbReference type="OrthoDB" id="4069539at2759"/>
<dbReference type="Proteomes" id="UP000000591">
    <property type="component" value="Chromosome III"/>
</dbReference>
<dbReference type="GO" id="GO:0034045">
    <property type="term" value="C:phagophore assembly site membrane"/>
    <property type="evidence" value="ECO:0007669"/>
    <property type="project" value="UniProtKB-SubCell"/>
</dbReference>
<dbReference type="GO" id="GO:0019777">
    <property type="term" value="F:Atg12 transferase activity"/>
    <property type="evidence" value="ECO:0007669"/>
    <property type="project" value="InterPro"/>
</dbReference>
<dbReference type="GO" id="GO:0006914">
    <property type="term" value="P:autophagy"/>
    <property type="evidence" value="ECO:0007669"/>
    <property type="project" value="UniProtKB-KW"/>
</dbReference>
<dbReference type="GO" id="GO:0015031">
    <property type="term" value="P:protein transport"/>
    <property type="evidence" value="ECO:0007669"/>
    <property type="project" value="UniProtKB-KW"/>
</dbReference>
<dbReference type="Gene3D" id="3.30.1460.50">
    <property type="match status" value="1"/>
</dbReference>
<dbReference type="InterPro" id="IPR016524">
    <property type="entry name" value="Atg10"/>
</dbReference>
<dbReference type="InterPro" id="IPR007135">
    <property type="entry name" value="Atg3/Atg10"/>
</dbReference>
<dbReference type="Pfam" id="PF03987">
    <property type="entry name" value="Autophagy_act_C"/>
    <property type="match status" value="1"/>
</dbReference>
<dbReference type="PIRSF" id="PIRSF007802">
    <property type="entry name" value="Autophagy-rel_ATG10"/>
    <property type="match status" value="1"/>
</dbReference>
<organism>
    <name type="scientific">Eremothecium gossypii (strain ATCC 10895 / CBS 109.51 / FGSC 9923 / NRRL Y-1056)</name>
    <name type="common">Yeast</name>
    <name type="synonym">Ashbya gossypii</name>
    <dbReference type="NCBI Taxonomy" id="284811"/>
    <lineage>
        <taxon>Eukaryota</taxon>
        <taxon>Fungi</taxon>
        <taxon>Dikarya</taxon>
        <taxon>Ascomycota</taxon>
        <taxon>Saccharomycotina</taxon>
        <taxon>Saccharomycetes</taxon>
        <taxon>Saccharomycetales</taxon>
        <taxon>Saccharomycetaceae</taxon>
        <taxon>Eremothecium</taxon>
    </lineage>
</organism>
<sequence>MLSAEDFSDQVLRLLPLLRRWRRCEHALWDPRARRLQLSVATARNSARFDVRVDLHPLYAVPQLLLRYWEPDPAVSEYEVWKLHFVDPYQLPLWQPGRFSIALDQVPATSGSAYETWYVVNSCDTDANVGPETDNYMLRWFSLYGQLLDENLGFTLAAALVAPCTDQKKA</sequence>
<proteinExistence type="inferred from homology"/>
<accession>Q75CI5</accession>
<comment type="function">
    <text evidence="1">E2-like enzyme required for the cytoplasm to vacuole transport (Cvt), autophagy and nucleophagy. Acts as an E2-like enzyme that catalyzes the conjugation of ATG12 to ATG5. ATG12 conjugation to ATG5 is required for proper localization of ATG8 to the preautophagosomal structure (PAS). Likely serves as an ATG5-recognition molecule (By similarity).</text>
</comment>
<comment type="subunit">
    <text evidence="1">Forms homooligomers.</text>
</comment>
<comment type="subcellular location">
    <subcellularLocation>
        <location evidence="1">Preautophagosomal structure membrane</location>
        <topology evidence="1">Peripheral membrane protein</topology>
    </subcellularLocation>
</comment>
<comment type="similarity">
    <text evidence="2">Belongs to the ATG10 family.</text>
</comment>
<keyword id="KW-0072">Autophagy</keyword>
<keyword id="KW-0472">Membrane</keyword>
<keyword id="KW-0653">Protein transport</keyword>
<keyword id="KW-1185">Reference proteome</keyword>
<keyword id="KW-0808">Transferase</keyword>
<keyword id="KW-0813">Transport</keyword>
<keyword id="KW-0833">Ubl conjugation pathway</keyword>
<protein>
    <recommendedName>
        <fullName>Ubiquitin-like-conjugating enzyme ATG10</fullName>
        <ecNumber>2.3.2.-</ecNumber>
    </recommendedName>
    <alternativeName>
        <fullName>Autophagy-related protein 10</fullName>
    </alternativeName>
</protein>
<name>ATG10_EREGS</name>
<feature type="chain" id="PRO_0000096185" description="Ubiquitin-like-conjugating enzyme ATG10">
    <location>
        <begin position="1"/>
        <end position="170"/>
    </location>
</feature>
<feature type="active site" description="Glycyl thioester intermediate" evidence="1">
    <location>
        <position position="123"/>
    </location>
</feature>